<protein>
    <recommendedName>
        <fullName evidence="1">Enoyl-[acyl-carrier-protein] reductase [NADH]</fullName>
        <shortName evidence="1">ENR</shortName>
        <ecNumber evidence="1">1.3.1.9</ecNumber>
    </recommendedName>
</protein>
<dbReference type="EC" id="1.3.1.9" evidence="1"/>
<dbReference type="EMBL" id="CP000720">
    <property type="protein sequence ID" value="ABS48724.1"/>
    <property type="molecule type" value="Genomic_DNA"/>
</dbReference>
<dbReference type="RefSeq" id="WP_012105981.1">
    <property type="nucleotide sequence ID" value="NC_009708.1"/>
</dbReference>
<dbReference type="SMR" id="A7FPC3"/>
<dbReference type="KEGG" id="ypi:YpsIP31758_4159"/>
<dbReference type="HOGENOM" id="CLU_057698_1_0_6"/>
<dbReference type="UniPathway" id="UPA00094"/>
<dbReference type="Proteomes" id="UP000002412">
    <property type="component" value="Chromosome"/>
</dbReference>
<dbReference type="GO" id="GO:0004318">
    <property type="term" value="F:enoyl-[acyl-carrier-protein] reductase (NADH) activity"/>
    <property type="evidence" value="ECO:0007669"/>
    <property type="project" value="UniProtKB-UniRule"/>
</dbReference>
<dbReference type="GO" id="GO:0051287">
    <property type="term" value="F:NAD binding"/>
    <property type="evidence" value="ECO:0007669"/>
    <property type="project" value="UniProtKB-UniRule"/>
</dbReference>
<dbReference type="GO" id="GO:0050343">
    <property type="term" value="F:trans-2-enoyl-CoA reductase (NADH) activity"/>
    <property type="evidence" value="ECO:0007669"/>
    <property type="project" value="TreeGrafter"/>
</dbReference>
<dbReference type="GO" id="GO:0006633">
    <property type="term" value="P:fatty acid biosynthetic process"/>
    <property type="evidence" value="ECO:0007669"/>
    <property type="project" value="UniProtKB-UniRule"/>
</dbReference>
<dbReference type="FunFam" id="3.40.50.720:FF:000221">
    <property type="entry name" value="Enoyl-[acyl-carrier-protein] reductase [NADH]"/>
    <property type="match status" value="1"/>
</dbReference>
<dbReference type="Gene3D" id="3.40.50.720">
    <property type="entry name" value="NAD(P)-binding Rossmann-like Domain"/>
    <property type="match status" value="1"/>
</dbReference>
<dbReference type="HAMAP" id="MF_01838">
    <property type="entry name" value="FabV_reductase"/>
    <property type="match status" value="1"/>
</dbReference>
<dbReference type="InterPro" id="IPR024906">
    <property type="entry name" value="Eno_Rdtase_FAD-bd_dom"/>
</dbReference>
<dbReference type="InterPro" id="IPR024910">
    <property type="entry name" value="Enoyl-CoA_Rdtase_cat_dom"/>
</dbReference>
<dbReference type="InterPro" id="IPR050048">
    <property type="entry name" value="FabV-like_NADH_b"/>
</dbReference>
<dbReference type="InterPro" id="IPR010758">
    <property type="entry name" value="Trans-2-enoyl-CoA_reductase"/>
</dbReference>
<dbReference type="NCBIfam" id="NF043048">
    <property type="entry name" value="EnoyACPredFabV"/>
    <property type="match status" value="1"/>
</dbReference>
<dbReference type="NCBIfam" id="NF010177">
    <property type="entry name" value="PRK13656.1"/>
    <property type="match status" value="1"/>
</dbReference>
<dbReference type="PANTHER" id="PTHR37480">
    <property type="entry name" value="ENOYL-[ACYL-CARRIER-PROTEIN] REDUCTASE [NADH]"/>
    <property type="match status" value="1"/>
</dbReference>
<dbReference type="PANTHER" id="PTHR37480:SF1">
    <property type="entry name" value="ENOYL-[ACYL-CARRIER-PROTEIN] REDUCTASE [NADH]"/>
    <property type="match status" value="1"/>
</dbReference>
<dbReference type="Pfam" id="PF07055">
    <property type="entry name" value="Eno-Rase_FAD_bd"/>
    <property type="match status" value="1"/>
</dbReference>
<dbReference type="Pfam" id="PF12242">
    <property type="entry name" value="Eno-Rase_NADH_b"/>
    <property type="match status" value="1"/>
</dbReference>
<dbReference type="Pfam" id="PF12241">
    <property type="entry name" value="Enoyl_reductase"/>
    <property type="match status" value="1"/>
</dbReference>
<gene>
    <name evidence="1" type="primary">fabV</name>
    <name type="ordered locus">YpsIP31758_4159</name>
</gene>
<proteinExistence type="inferred from homology"/>
<accession>A7FPC3</accession>
<organism>
    <name type="scientific">Yersinia pseudotuberculosis serotype O:1b (strain IP 31758)</name>
    <dbReference type="NCBI Taxonomy" id="349747"/>
    <lineage>
        <taxon>Bacteria</taxon>
        <taxon>Pseudomonadati</taxon>
        <taxon>Pseudomonadota</taxon>
        <taxon>Gammaproteobacteria</taxon>
        <taxon>Enterobacterales</taxon>
        <taxon>Yersiniaceae</taxon>
        <taxon>Yersinia</taxon>
    </lineage>
</organism>
<evidence type="ECO:0000255" key="1">
    <source>
        <dbReference type="HAMAP-Rule" id="MF_01838"/>
    </source>
</evidence>
<feature type="chain" id="PRO_1000070508" description="Enoyl-[acyl-carrier-protein] reductase [NADH]">
    <location>
        <begin position="1"/>
        <end position="399"/>
    </location>
</feature>
<feature type="active site" description="Proton donor" evidence="1">
    <location>
        <position position="235"/>
    </location>
</feature>
<feature type="binding site" evidence="1">
    <location>
        <begin position="48"/>
        <end position="53"/>
    </location>
    <ligand>
        <name>NAD(+)</name>
        <dbReference type="ChEBI" id="CHEBI:57540"/>
    </ligand>
</feature>
<feature type="binding site" evidence="1">
    <location>
        <begin position="74"/>
        <end position="75"/>
    </location>
    <ligand>
        <name>NAD(+)</name>
        <dbReference type="ChEBI" id="CHEBI:57540"/>
    </ligand>
</feature>
<feature type="binding site" evidence="1">
    <location>
        <begin position="111"/>
        <end position="112"/>
    </location>
    <ligand>
        <name>NAD(+)</name>
        <dbReference type="ChEBI" id="CHEBI:57540"/>
    </ligand>
</feature>
<feature type="binding site" evidence="1">
    <location>
        <begin position="139"/>
        <end position="140"/>
    </location>
    <ligand>
        <name>NAD(+)</name>
        <dbReference type="ChEBI" id="CHEBI:57540"/>
    </ligand>
</feature>
<feature type="binding site" evidence="1">
    <location>
        <position position="225"/>
    </location>
    <ligand>
        <name>substrate</name>
    </ligand>
</feature>
<feature type="binding site" evidence="1">
    <location>
        <position position="244"/>
    </location>
    <ligand>
        <name>NAD(+)</name>
        <dbReference type="ChEBI" id="CHEBI:57540"/>
    </ligand>
</feature>
<feature type="binding site" evidence="1">
    <location>
        <begin position="274"/>
        <end position="276"/>
    </location>
    <ligand>
        <name>NAD(+)</name>
        <dbReference type="ChEBI" id="CHEBI:57540"/>
    </ligand>
</feature>
<feature type="site" description="Plays an important role in discriminating NADH against NADPH" evidence="1">
    <location>
        <position position="75"/>
    </location>
</feature>
<comment type="function">
    <text evidence="1">Involved in the final reduction of the elongation cycle of fatty acid synthesis (FAS II). Catalyzes the reduction of a carbon-carbon double bond in an enoyl moiety that is covalently linked to an acyl carrier protein (ACP).</text>
</comment>
<comment type="catalytic activity">
    <reaction evidence="1">
        <text>a 2,3-saturated acyl-[ACP] + NAD(+) = a (2E)-enoyl-[ACP] + NADH + H(+)</text>
        <dbReference type="Rhea" id="RHEA:10240"/>
        <dbReference type="Rhea" id="RHEA-COMP:9925"/>
        <dbReference type="Rhea" id="RHEA-COMP:9926"/>
        <dbReference type="ChEBI" id="CHEBI:15378"/>
        <dbReference type="ChEBI" id="CHEBI:57540"/>
        <dbReference type="ChEBI" id="CHEBI:57945"/>
        <dbReference type="ChEBI" id="CHEBI:78784"/>
        <dbReference type="ChEBI" id="CHEBI:78785"/>
        <dbReference type="EC" id="1.3.1.9"/>
    </reaction>
</comment>
<comment type="pathway">
    <text evidence="1">Lipid metabolism; fatty acid biosynthesis.</text>
</comment>
<comment type="subunit">
    <text evidence="1">Monomer.</text>
</comment>
<comment type="similarity">
    <text evidence="1">Belongs to the TER reductase family.</text>
</comment>
<name>FABV_YERP3</name>
<sequence length="399" mass="43331">MIIKPRVRGFICVTAHPAGCEANVKKQIDYVTTEGPIANGPKRVLVIGASTGYGLAARITAAFGCGADTLGVFFERPGEEGKPGTSGWYNSAAFHKFAAQKGLYAKSINGDAFSDEIKQLTIDAIKQDLGQVDQVIYSLASPRRTHPKTGEVFNSTLKPIGNAVNLRGLDTDKEVIKESVLQPATQSEIDSTVAVMGGEDWQMWIDALLDAGVLAEGAQTTAFTYLGEKITHDIYWNGSIGAAKKDLDQKVLAIRESLAAHGGGDARVSVLKAVVTQASSAIPMMPLYLSLLFKVMKEKGTHEGCIEQVYSLYKDSLCGDSPHMDQEGRLRADYKELDPEVQNQVQQLWDQVTNDNIYLLTDFVGYKSEFLNLFGFGIDGVDYDADVNPDVKIPNLIQG</sequence>
<reference key="1">
    <citation type="journal article" date="2007" name="PLoS Genet.">
        <title>The complete genome sequence of Yersinia pseudotuberculosis IP31758, the causative agent of Far East scarlet-like fever.</title>
        <authorList>
            <person name="Eppinger M."/>
            <person name="Rosovitz M.J."/>
            <person name="Fricke W.F."/>
            <person name="Rasko D.A."/>
            <person name="Kokorina G."/>
            <person name="Fayolle C."/>
            <person name="Lindler L.E."/>
            <person name="Carniel E."/>
            <person name="Ravel J."/>
        </authorList>
    </citation>
    <scope>NUCLEOTIDE SEQUENCE [LARGE SCALE GENOMIC DNA]</scope>
    <source>
        <strain>IP 31758</strain>
    </source>
</reference>
<keyword id="KW-0275">Fatty acid biosynthesis</keyword>
<keyword id="KW-0276">Fatty acid metabolism</keyword>
<keyword id="KW-0444">Lipid biosynthesis</keyword>
<keyword id="KW-0443">Lipid metabolism</keyword>
<keyword id="KW-0520">NAD</keyword>
<keyword id="KW-0560">Oxidoreductase</keyword>